<accession>Q57QS6</accession>
<comment type="similarity">
    <text evidence="1">Belongs to the UPF0319 family.</text>
</comment>
<gene>
    <name evidence="1" type="primary">yccT</name>
    <name type="ordered locus">SCH_1029</name>
</gene>
<name>YCCT_SALCH</name>
<sequence>MKTGALTTFLALCLPVTVFATTLRLSNEVDLLVLDGKKVSSSLLRGAESIELENGPHQLVFRVEKTIRLPGNEERLYISPPLVISFDTQLISQVNFQLPRLENEREASHFNAAPRLALLDGDAMPIPVKLDILAITSTAKVVDYEIETERYNKSAKRASLPQFATMMADDSTLLSDVSELDTVPPQSQTLTEQRLKYWFRLADPQTRHHFLQWAEKQPPS</sequence>
<reference key="1">
    <citation type="journal article" date="2005" name="Nucleic Acids Res.">
        <title>The genome sequence of Salmonella enterica serovar Choleraesuis, a highly invasive and resistant zoonotic pathogen.</title>
        <authorList>
            <person name="Chiu C.-H."/>
            <person name="Tang P."/>
            <person name="Chu C."/>
            <person name="Hu S."/>
            <person name="Bao Q."/>
            <person name="Yu J."/>
            <person name="Chou Y.-Y."/>
            <person name="Wang H.-S."/>
            <person name="Lee Y.-S."/>
        </authorList>
    </citation>
    <scope>NUCLEOTIDE SEQUENCE [LARGE SCALE GENOMIC DNA]</scope>
    <source>
        <strain>SC-B67</strain>
    </source>
</reference>
<organism>
    <name type="scientific">Salmonella choleraesuis (strain SC-B67)</name>
    <dbReference type="NCBI Taxonomy" id="321314"/>
    <lineage>
        <taxon>Bacteria</taxon>
        <taxon>Pseudomonadati</taxon>
        <taxon>Pseudomonadota</taxon>
        <taxon>Gammaproteobacteria</taxon>
        <taxon>Enterobacterales</taxon>
        <taxon>Enterobacteriaceae</taxon>
        <taxon>Salmonella</taxon>
    </lineage>
</organism>
<dbReference type="EMBL" id="AE017220">
    <property type="protein sequence ID" value="AAX64935.1"/>
    <property type="molecule type" value="Genomic_DNA"/>
</dbReference>
<dbReference type="RefSeq" id="WP_000847732.1">
    <property type="nucleotide sequence ID" value="NC_006905.1"/>
</dbReference>
<dbReference type="KEGG" id="sec:SCH_1029"/>
<dbReference type="HOGENOM" id="CLU_073782_2_0_6"/>
<dbReference type="Proteomes" id="UP000000538">
    <property type="component" value="Chromosome"/>
</dbReference>
<dbReference type="HAMAP" id="MF_00789">
    <property type="entry name" value="UPF0319"/>
    <property type="match status" value="1"/>
</dbReference>
<dbReference type="InterPro" id="IPR018635">
    <property type="entry name" value="UPF0319"/>
</dbReference>
<dbReference type="NCBIfam" id="NF047712">
    <property type="entry name" value="CrliSynInhib"/>
    <property type="match status" value="1"/>
</dbReference>
<dbReference type="NCBIfam" id="NF002967">
    <property type="entry name" value="PRK03641.1"/>
    <property type="match status" value="1"/>
</dbReference>
<dbReference type="PANTHER" id="PTHR38108">
    <property type="entry name" value="UPF0319 PROTEIN YCCT"/>
    <property type="match status" value="1"/>
</dbReference>
<dbReference type="PANTHER" id="PTHR38108:SF1">
    <property type="entry name" value="UPF0319 PROTEIN YCCT"/>
    <property type="match status" value="1"/>
</dbReference>
<dbReference type="Pfam" id="PF09829">
    <property type="entry name" value="DUF2057"/>
    <property type="match status" value="1"/>
</dbReference>
<feature type="signal peptide" evidence="1">
    <location>
        <begin position="1"/>
        <end position="20"/>
    </location>
</feature>
<feature type="chain" id="PRO_1000046905" description="UPF0319 protein YccT">
    <location>
        <begin position="21"/>
        <end position="220"/>
    </location>
</feature>
<proteinExistence type="inferred from homology"/>
<evidence type="ECO:0000255" key="1">
    <source>
        <dbReference type="HAMAP-Rule" id="MF_00789"/>
    </source>
</evidence>
<keyword id="KW-0732">Signal</keyword>
<protein>
    <recommendedName>
        <fullName evidence="1">UPF0319 protein YccT</fullName>
    </recommendedName>
</protein>